<comment type="function">
    <text evidence="1">Catalyzes the attachment of proline to tRNA(Pro) in a two-step reaction: proline is first activated by ATP to form Pro-AMP and then transferred to the acceptor end of tRNA(Pro). As ProRS can inadvertently accommodate and process non-cognate amino acids such as alanine and cysteine, to avoid such errors it has two additional distinct editing activities against alanine. One activity is designated as 'pretransfer' editing and involves the tRNA(Pro)-independent hydrolysis of activated Ala-AMP. The other activity is designated 'posttransfer' editing and involves deacylation of mischarged Ala-tRNA(Pro). The misacylated Cys-tRNA(Pro) is not edited by ProRS.</text>
</comment>
<comment type="catalytic activity">
    <reaction evidence="1">
        <text>tRNA(Pro) + L-proline + ATP = L-prolyl-tRNA(Pro) + AMP + diphosphate</text>
        <dbReference type="Rhea" id="RHEA:14305"/>
        <dbReference type="Rhea" id="RHEA-COMP:9700"/>
        <dbReference type="Rhea" id="RHEA-COMP:9702"/>
        <dbReference type="ChEBI" id="CHEBI:30616"/>
        <dbReference type="ChEBI" id="CHEBI:33019"/>
        <dbReference type="ChEBI" id="CHEBI:60039"/>
        <dbReference type="ChEBI" id="CHEBI:78442"/>
        <dbReference type="ChEBI" id="CHEBI:78532"/>
        <dbReference type="ChEBI" id="CHEBI:456215"/>
        <dbReference type="EC" id="6.1.1.15"/>
    </reaction>
</comment>
<comment type="subunit">
    <text evidence="1">Homodimer.</text>
</comment>
<comment type="subcellular location">
    <subcellularLocation>
        <location evidence="1">Cytoplasm</location>
    </subcellularLocation>
</comment>
<comment type="domain">
    <text evidence="1">Consists of three domains: the N-terminal catalytic domain, the editing domain and the C-terminal anticodon-binding domain.</text>
</comment>
<comment type="similarity">
    <text evidence="1">Belongs to the class-II aminoacyl-tRNA synthetase family. ProS type 1 subfamily.</text>
</comment>
<gene>
    <name evidence="1" type="primary">proS</name>
    <name type="ordered locus">DET0368</name>
</gene>
<protein>
    <recommendedName>
        <fullName evidence="1">Proline--tRNA ligase</fullName>
        <ecNumber evidence="1">6.1.1.15</ecNumber>
    </recommendedName>
    <alternativeName>
        <fullName evidence="1">Prolyl-tRNA synthetase</fullName>
        <shortName evidence="1">ProRS</shortName>
    </alternativeName>
</protein>
<sequence length="569" mass="63149">MRYSRLFGKTQREIPSDAETISHQLLLRSGMIAQLTAGVYSFMPLAWRSIQKIENIIRQEMNKSGCQELAMPVLQPVEIWQQSGREAPFGQTLFHLKDRKDRNLVLGPTHEEVITDLASRYIQSYRDLPQRLYQIQTKFRDEPRPRGGLIRVREFIMKDMYSFDASPEGLDESYQTMKQAYENVYRRCGLESMVIDADSGAIGGKASHEFMIVAESGEDSIIYCPKCNYAANAEKAVFKKKTLPKEPPKDLEEVATPGQKTISEVAAFLSLKPENTLKAVFYMADGKFVMAVIRGDLDINEIKLKNLLKCNDLRLAEDSEVKAAGIAAGFASPVGLKNSLTVADDSVENGSNFVAGANKDGFHLKNVNFGRDFKADKMADIALAAEGAACPFCDGTFASKRGVEVGHIFKLGTFLSERFGANFTDAEGISHPIIMGCYGMGVGRLLAAAIEQNHDEKGIIWPMPIAPYQIYICGLFLDNPAVSQAAEKIYTELEAQGVEVLFDDRELTAGVKFNDADLLGIPLRLTISPRNLDKGGVELKLRRNKESELVPLESIMERVITCIKSQSDL</sequence>
<accession>Q3Z9I5</accession>
<evidence type="ECO:0000255" key="1">
    <source>
        <dbReference type="HAMAP-Rule" id="MF_01569"/>
    </source>
</evidence>
<reference key="1">
    <citation type="journal article" date="2005" name="Science">
        <title>Genome sequence of the PCE-dechlorinating bacterium Dehalococcoides ethenogenes.</title>
        <authorList>
            <person name="Seshadri R."/>
            <person name="Adrian L."/>
            <person name="Fouts D.E."/>
            <person name="Eisen J.A."/>
            <person name="Phillippy A.M."/>
            <person name="Methe B.A."/>
            <person name="Ward N.L."/>
            <person name="Nelson W.C."/>
            <person name="DeBoy R.T."/>
            <person name="Khouri H.M."/>
            <person name="Kolonay J.F."/>
            <person name="Dodson R.J."/>
            <person name="Daugherty S.C."/>
            <person name="Brinkac L.M."/>
            <person name="Sullivan S.A."/>
            <person name="Madupu R."/>
            <person name="Nelson K.E."/>
            <person name="Kang K.H."/>
            <person name="Impraim M."/>
            <person name="Tran K."/>
            <person name="Robinson J.M."/>
            <person name="Forberger H.A."/>
            <person name="Fraser C.M."/>
            <person name="Zinder S.H."/>
            <person name="Heidelberg J.F."/>
        </authorList>
    </citation>
    <scope>NUCLEOTIDE SEQUENCE [LARGE SCALE GENOMIC DNA]</scope>
    <source>
        <strain>ATCC BAA-2266 / KCTC 15142 / 195</strain>
    </source>
</reference>
<name>SYP_DEHM1</name>
<feature type="chain" id="PRO_0000248682" description="Proline--tRNA ligase">
    <location>
        <begin position="1"/>
        <end position="569"/>
    </location>
</feature>
<proteinExistence type="inferred from homology"/>
<organism>
    <name type="scientific">Dehalococcoides mccartyi (strain ATCC BAA-2266 / KCTC 15142 / 195)</name>
    <name type="common">Dehalococcoides ethenogenes (strain 195)</name>
    <dbReference type="NCBI Taxonomy" id="243164"/>
    <lineage>
        <taxon>Bacteria</taxon>
        <taxon>Bacillati</taxon>
        <taxon>Chloroflexota</taxon>
        <taxon>Dehalococcoidia</taxon>
        <taxon>Dehalococcoidales</taxon>
        <taxon>Dehalococcoidaceae</taxon>
        <taxon>Dehalococcoides</taxon>
    </lineage>
</organism>
<dbReference type="EC" id="6.1.1.15" evidence="1"/>
<dbReference type="EMBL" id="CP000027">
    <property type="protein sequence ID" value="AAW40362.1"/>
    <property type="molecule type" value="Genomic_DNA"/>
</dbReference>
<dbReference type="RefSeq" id="WP_010936147.1">
    <property type="nucleotide sequence ID" value="NC_002936.3"/>
</dbReference>
<dbReference type="SMR" id="Q3Z9I5"/>
<dbReference type="FunCoup" id="Q3Z9I5">
    <property type="interactions" value="254"/>
</dbReference>
<dbReference type="STRING" id="243164.DET0368"/>
<dbReference type="GeneID" id="3230326"/>
<dbReference type="KEGG" id="det:DET0368"/>
<dbReference type="PATRIC" id="fig|243164.10.peg.348"/>
<dbReference type="eggNOG" id="COG0442">
    <property type="taxonomic scope" value="Bacteria"/>
</dbReference>
<dbReference type="HOGENOM" id="CLU_016739_0_0_0"/>
<dbReference type="InParanoid" id="Q3Z9I5"/>
<dbReference type="Proteomes" id="UP000008289">
    <property type="component" value="Chromosome"/>
</dbReference>
<dbReference type="GO" id="GO:0005829">
    <property type="term" value="C:cytosol"/>
    <property type="evidence" value="ECO:0007669"/>
    <property type="project" value="TreeGrafter"/>
</dbReference>
<dbReference type="GO" id="GO:0002161">
    <property type="term" value="F:aminoacyl-tRNA deacylase activity"/>
    <property type="evidence" value="ECO:0007669"/>
    <property type="project" value="InterPro"/>
</dbReference>
<dbReference type="GO" id="GO:0005524">
    <property type="term" value="F:ATP binding"/>
    <property type="evidence" value="ECO:0007669"/>
    <property type="project" value="UniProtKB-UniRule"/>
</dbReference>
<dbReference type="GO" id="GO:0004827">
    <property type="term" value="F:proline-tRNA ligase activity"/>
    <property type="evidence" value="ECO:0007669"/>
    <property type="project" value="UniProtKB-UniRule"/>
</dbReference>
<dbReference type="GO" id="GO:0006433">
    <property type="term" value="P:prolyl-tRNA aminoacylation"/>
    <property type="evidence" value="ECO:0007669"/>
    <property type="project" value="UniProtKB-UniRule"/>
</dbReference>
<dbReference type="CDD" id="cd04334">
    <property type="entry name" value="ProRS-INS"/>
    <property type="match status" value="1"/>
</dbReference>
<dbReference type="CDD" id="cd00861">
    <property type="entry name" value="ProRS_anticodon_short"/>
    <property type="match status" value="1"/>
</dbReference>
<dbReference type="CDD" id="cd00779">
    <property type="entry name" value="ProRS_core_prok"/>
    <property type="match status" value="1"/>
</dbReference>
<dbReference type="FunFam" id="3.30.930.10:FF:000042">
    <property type="entry name" value="probable proline--tRNA ligase, mitochondrial"/>
    <property type="match status" value="1"/>
</dbReference>
<dbReference type="Gene3D" id="3.40.50.800">
    <property type="entry name" value="Anticodon-binding domain"/>
    <property type="match status" value="1"/>
</dbReference>
<dbReference type="Gene3D" id="3.30.930.10">
    <property type="entry name" value="Bira Bifunctional Protein, Domain 2"/>
    <property type="match status" value="2"/>
</dbReference>
<dbReference type="Gene3D" id="3.90.960.10">
    <property type="entry name" value="YbaK/aminoacyl-tRNA synthetase-associated domain"/>
    <property type="match status" value="1"/>
</dbReference>
<dbReference type="HAMAP" id="MF_01569">
    <property type="entry name" value="Pro_tRNA_synth_type1"/>
    <property type="match status" value="1"/>
</dbReference>
<dbReference type="InterPro" id="IPR002314">
    <property type="entry name" value="aa-tRNA-synt_IIb"/>
</dbReference>
<dbReference type="InterPro" id="IPR006195">
    <property type="entry name" value="aa-tRNA-synth_II"/>
</dbReference>
<dbReference type="InterPro" id="IPR045864">
    <property type="entry name" value="aa-tRNA-synth_II/BPL/LPL"/>
</dbReference>
<dbReference type="InterPro" id="IPR004154">
    <property type="entry name" value="Anticodon-bd"/>
</dbReference>
<dbReference type="InterPro" id="IPR036621">
    <property type="entry name" value="Anticodon-bd_dom_sf"/>
</dbReference>
<dbReference type="InterPro" id="IPR002316">
    <property type="entry name" value="Pro-tRNA-ligase_IIa"/>
</dbReference>
<dbReference type="InterPro" id="IPR004500">
    <property type="entry name" value="Pro-tRNA-synth_IIa_bac-type"/>
</dbReference>
<dbReference type="InterPro" id="IPR023717">
    <property type="entry name" value="Pro-tRNA-Synthase_IIa_type1"/>
</dbReference>
<dbReference type="InterPro" id="IPR050062">
    <property type="entry name" value="Pro-tRNA_synthetase"/>
</dbReference>
<dbReference type="InterPro" id="IPR044140">
    <property type="entry name" value="ProRS_anticodon_short"/>
</dbReference>
<dbReference type="InterPro" id="IPR033730">
    <property type="entry name" value="ProRS_core_prok"/>
</dbReference>
<dbReference type="InterPro" id="IPR036754">
    <property type="entry name" value="YbaK/aa-tRNA-synt-asso_dom_sf"/>
</dbReference>
<dbReference type="InterPro" id="IPR007214">
    <property type="entry name" value="YbaK/aa-tRNA-synth-assoc-dom"/>
</dbReference>
<dbReference type="NCBIfam" id="NF006625">
    <property type="entry name" value="PRK09194.1"/>
    <property type="match status" value="1"/>
</dbReference>
<dbReference type="NCBIfam" id="TIGR00409">
    <property type="entry name" value="proS_fam_II"/>
    <property type="match status" value="1"/>
</dbReference>
<dbReference type="PANTHER" id="PTHR42753">
    <property type="entry name" value="MITOCHONDRIAL RIBOSOME PROTEIN L39/PROLYL-TRNA LIGASE FAMILY MEMBER"/>
    <property type="match status" value="1"/>
</dbReference>
<dbReference type="PANTHER" id="PTHR42753:SF2">
    <property type="entry name" value="PROLINE--TRNA LIGASE"/>
    <property type="match status" value="1"/>
</dbReference>
<dbReference type="Pfam" id="PF03129">
    <property type="entry name" value="HGTP_anticodon"/>
    <property type="match status" value="1"/>
</dbReference>
<dbReference type="Pfam" id="PF00587">
    <property type="entry name" value="tRNA-synt_2b"/>
    <property type="match status" value="1"/>
</dbReference>
<dbReference type="Pfam" id="PF04073">
    <property type="entry name" value="tRNA_edit"/>
    <property type="match status" value="1"/>
</dbReference>
<dbReference type="PRINTS" id="PR01046">
    <property type="entry name" value="TRNASYNTHPRO"/>
</dbReference>
<dbReference type="SUPFAM" id="SSF52954">
    <property type="entry name" value="Class II aaRS ABD-related"/>
    <property type="match status" value="1"/>
</dbReference>
<dbReference type="SUPFAM" id="SSF55681">
    <property type="entry name" value="Class II aaRS and biotin synthetases"/>
    <property type="match status" value="1"/>
</dbReference>
<dbReference type="SUPFAM" id="SSF55826">
    <property type="entry name" value="YbaK/ProRS associated domain"/>
    <property type="match status" value="1"/>
</dbReference>
<dbReference type="PROSITE" id="PS50862">
    <property type="entry name" value="AA_TRNA_LIGASE_II"/>
    <property type="match status" value="1"/>
</dbReference>
<keyword id="KW-0030">Aminoacyl-tRNA synthetase</keyword>
<keyword id="KW-0067">ATP-binding</keyword>
<keyword id="KW-0963">Cytoplasm</keyword>
<keyword id="KW-0436">Ligase</keyword>
<keyword id="KW-0547">Nucleotide-binding</keyword>
<keyword id="KW-0648">Protein biosynthesis</keyword>